<name>Y171_PSET1</name>
<keyword id="KW-0997">Cell inner membrane</keyword>
<keyword id="KW-1003">Cell membrane</keyword>
<keyword id="KW-0472">Membrane</keyword>
<keyword id="KW-1185">Reference proteome</keyword>
<keyword id="KW-0812">Transmembrane</keyword>
<keyword id="KW-1133">Transmembrane helix</keyword>
<evidence type="ECO:0000255" key="1">
    <source>
        <dbReference type="HAMAP-Rule" id="MF_00672"/>
    </source>
</evidence>
<gene>
    <name type="ordered locus">PSHAa0171</name>
</gene>
<feature type="chain" id="PRO_1000131558" description="UPF0761 membrane protein PSHAa0171">
    <location>
        <begin position="1"/>
        <end position="300"/>
    </location>
</feature>
<feature type="transmembrane region" description="Helical" evidence="1">
    <location>
        <begin position="47"/>
        <end position="67"/>
    </location>
</feature>
<feature type="transmembrane region" description="Helical" evidence="1">
    <location>
        <begin position="100"/>
        <end position="120"/>
    </location>
</feature>
<feature type="transmembrane region" description="Helical" evidence="1">
    <location>
        <begin position="143"/>
        <end position="163"/>
    </location>
</feature>
<feature type="transmembrane region" description="Helical" evidence="1">
    <location>
        <begin position="181"/>
        <end position="201"/>
    </location>
</feature>
<feature type="transmembrane region" description="Helical" evidence="1">
    <location>
        <begin position="215"/>
        <end position="235"/>
    </location>
</feature>
<feature type="transmembrane region" description="Helical" evidence="1">
    <location>
        <begin position="249"/>
        <end position="269"/>
    </location>
</feature>
<organism>
    <name type="scientific">Pseudoalteromonas translucida (strain TAC 125)</name>
    <dbReference type="NCBI Taxonomy" id="326442"/>
    <lineage>
        <taxon>Bacteria</taxon>
        <taxon>Pseudomonadati</taxon>
        <taxon>Pseudomonadota</taxon>
        <taxon>Gammaproteobacteria</taxon>
        <taxon>Alteromonadales</taxon>
        <taxon>Pseudoalteromonadaceae</taxon>
        <taxon>Pseudoalteromonas</taxon>
    </lineage>
</organism>
<accession>Q3IJ43</accession>
<sequence length="300" mass="33252">MNDKLSYYKQQVGSFLRQQPGWWMQYINRCIDDQITVNAGYLAYVTLLSLVPLIAVGVAIFSAFPGFESTRLAIESFLFTNFVPTSSDVIKEHISSFAGNANQMTAVGIGFLAAIALLLIRNVDATLNRIWRIKKKRPMMISFAVYWMVLSLGPVFLGGSIAVTSYIVSLVSFADQGIPGFSGFLLKLLPYGISMVGFIMLYTLVPNTRVSFKAAIPGALFAAMLFELTKKGFALYISHFPSYEVIYGAVATIPILFVWIYLSWIVVLLGAELTACISPENIEDTPEIELDEQENTKDTL</sequence>
<dbReference type="EMBL" id="CR954246">
    <property type="protein sequence ID" value="CAI85274.1"/>
    <property type="molecule type" value="Genomic_DNA"/>
</dbReference>
<dbReference type="STRING" id="326442.PSHAa0171"/>
<dbReference type="KEGG" id="pha:PSHAa0171"/>
<dbReference type="PATRIC" id="fig|326442.8.peg.165"/>
<dbReference type="eggNOG" id="COG1295">
    <property type="taxonomic scope" value="Bacteria"/>
</dbReference>
<dbReference type="HOGENOM" id="CLU_032288_0_0_6"/>
<dbReference type="BioCyc" id="PHAL326442:PSHA_RS00865-MONOMER"/>
<dbReference type="Proteomes" id="UP000006843">
    <property type="component" value="Chromosome I"/>
</dbReference>
<dbReference type="GO" id="GO:0005886">
    <property type="term" value="C:plasma membrane"/>
    <property type="evidence" value="ECO:0007669"/>
    <property type="project" value="UniProtKB-SubCell"/>
</dbReference>
<dbReference type="HAMAP" id="MF_00672">
    <property type="entry name" value="UPF0761"/>
    <property type="match status" value="1"/>
</dbReference>
<dbReference type="InterPro" id="IPR023679">
    <property type="entry name" value="UPF0761_bac"/>
</dbReference>
<dbReference type="InterPro" id="IPR017039">
    <property type="entry name" value="Virul_fac_BrkB"/>
</dbReference>
<dbReference type="NCBIfam" id="NF002457">
    <property type="entry name" value="PRK01637.1"/>
    <property type="match status" value="1"/>
</dbReference>
<dbReference type="NCBIfam" id="TIGR00765">
    <property type="entry name" value="yihY_not_rbn"/>
    <property type="match status" value="1"/>
</dbReference>
<dbReference type="PANTHER" id="PTHR30213">
    <property type="entry name" value="INNER MEMBRANE PROTEIN YHJD"/>
    <property type="match status" value="1"/>
</dbReference>
<dbReference type="PANTHER" id="PTHR30213:SF0">
    <property type="entry name" value="UPF0761 MEMBRANE PROTEIN YIHY"/>
    <property type="match status" value="1"/>
</dbReference>
<dbReference type="Pfam" id="PF03631">
    <property type="entry name" value="Virul_fac_BrkB"/>
    <property type="match status" value="1"/>
</dbReference>
<dbReference type="PIRSF" id="PIRSF035875">
    <property type="entry name" value="RNase_BN"/>
    <property type="match status" value="1"/>
</dbReference>
<comment type="subcellular location">
    <subcellularLocation>
        <location evidence="1">Cell inner membrane</location>
        <topology evidence="1">Multi-pass membrane protein</topology>
    </subcellularLocation>
</comment>
<comment type="similarity">
    <text evidence="1">Belongs to the UPF0761 family.</text>
</comment>
<reference key="1">
    <citation type="journal article" date="2005" name="Genome Res.">
        <title>Coping with cold: the genome of the versatile marine Antarctica bacterium Pseudoalteromonas haloplanktis TAC125.</title>
        <authorList>
            <person name="Medigue C."/>
            <person name="Krin E."/>
            <person name="Pascal G."/>
            <person name="Barbe V."/>
            <person name="Bernsel A."/>
            <person name="Bertin P.N."/>
            <person name="Cheung F."/>
            <person name="Cruveiller S."/>
            <person name="D'Amico S."/>
            <person name="Duilio A."/>
            <person name="Fang G."/>
            <person name="Feller G."/>
            <person name="Ho C."/>
            <person name="Mangenot S."/>
            <person name="Marino G."/>
            <person name="Nilsson J."/>
            <person name="Parrilli E."/>
            <person name="Rocha E.P.C."/>
            <person name="Rouy Z."/>
            <person name="Sekowska A."/>
            <person name="Tutino M.L."/>
            <person name="Vallenet D."/>
            <person name="von Heijne G."/>
            <person name="Danchin A."/>
        </authorList>
    </citation>
    <scope>NUCLEOTIDE SEQUENCE [LARGE SCALE GENOMIC DNA]</scope>
    <source>
        <strain>TAC 125</strain>
    </source>
</reference>
<proteinExistence type="inferred from homology"/>
<protein>
    <recommendedName>
        <fullName evidence="1">UPF0761 membrane protein PSHAa0171</fullName>
    </recommendedName>
</protein>